<sequence>MQFLIPVVILCVSLVDSQKVLYNNEIGFNNGFYYAFWKDSGSATFTLESGGRYAGNWTTSTNNWVGGKGWNPGNSWRTVNYSGYYGINEYANSYLSLYGWTTNPLIEYYVVESYGSYSPLNCPGGTDEGSFTSGGATYQVRKCRRTNAPSIIGTQSFDQYFSVRTPKKGFGQVSGSVNFADHVQYWASKGLPLGTHAHQIFATEGYQSSGFADITVS</sequence>
<name>XYN_PHACE</name>
<proteinExistence type="evidence at transcript level"/>
<dbReference type="EC" id="3.2.1.8"/>
<dbReference type="EMBL" id="Y17908">
    <property type="protein sequence ID" value="CAA76932.1"/>
    <property type="molecule type" value="mRNA"/>
</dbReference>
<dbReference type="SMR" id="O97402"/>
<dbReference type="CAZy" id="GH11">
    <property type="family name" value="Glycoside Hydrolase Family 11"/>
</dbReference>
<dbReference type="OrthoDB" id="2115822at2759"/>
<dbReference type="UniPathway" id="UPA00114"/>
<dbReference type="GO" id="GO:0005576">
    <property type="term" value="C:extracellular region"/>
    <property type="evidence" value="ECO:0007669"/>
    <property type="project" value="UniProtKB-SubCell"/>
</dbReference>
<dbReference type="GO" id="GO:0031176">
    <property type="term" value="F:endo-1,4-beta-xylanase activity"/>
    <property type="evidence" value="ECO:0007669"/>
    <property type="project" value="UniProtKB-EC"/>
</dbReference>
<dbReference type="GO" id="GO:0007586">
    <property type="term" value="P:digestion"/>
    <property type="evidence" value="ECO:0007669"/>
    <property type="project" value="UniProtKB-KW"/>
</dbReference>
<dbReference type="GO" id="GO:0045493">
    <property type="term" value="P:xylan catabolic process"/>
    <property type="evidence" value="ECO:0007669"/>
    <property type="project" value="UniProtKB-UniPathway"/>
</dbReference>
<dbReference type="Gene3D" id="2.60.120.180">
    <property type="match status" value="1"/>
</dbReference>
<dbReference type="InterPro" id="IPR013320">
    <property type="entry name" value="ConA-like_dom_sf"/>
</dbReference>
<dbReference type="InterPro" id="IPR013319">
    <property type="entry name" value="GH11/12"/>
</dbReference>
<dbReference type="InterPro" id="IPR018208">
    <property type="entry name" value="GH11_AS_1"/>
</dbReference>
<dbReference type="InterPro" id="IPR033119">
    <property type="entry name" value="GH11_AS_2"/>
</dbReference>
<dbReference type="InterPro" id="IPR033123">
    <property type="entry name" value="GH11_dom"/>
</dbReference>
<dbReference type="InterPro" id="IPR001137">
    <property type="entry name" value="Glyco_hydro_11"/>
</dbReference>
<dbReference type="PANTHER" id="PTHR46828">
    <property type="entry name" value="ENDO-1,4-BETA-XYLANASE A-RELATED"/>
    <property type="match status" value="1"/>
</dbReference>
<dbReference type="PANTHER" id="PTHR46828:SF2">
    <property type="entry name" value="ENDO-1,4-BETA-XYLANASE A-RELATED"/>
    <property type="match status" value="1"/>
</dbReference>
<dbReference type="Pfam" id="PF00457">
    <property type="entry name" value="Glyco_hydro_11"/>
    <property type="match status" value="1"/>
</dbReference>
<dbReference type="PRINTS" id="PR00911">
    <property type="entry name" value="GLHYDRLASE11"/>
</dbReference>
<dbReference type="SUPFAM" id="SSF49899">
    <property type="entry name" value="Concanavalin A-like lectins/glucanases"/>
    <property type="match status" value="1"/>
</dbReference>
<dbReference type="PROSITE" id="PS00776">
    <property type="entry name" value="GH11_1"/>
    <property type="match status" value="1"/>
</dbReference>
<dbReference type="PROSITE" id="PS00777">
    <property type="entry name" value="GH11_2"/>
    <property type="match status" value="1"/>
</dbReference>
<dbReference type="PROSITE" id="PS51761">
    <property type="entry name" value="GH11_3"/>
    <property type="match status" value="1"/>
</dbReference>
<comment type="catalytic activity">
    <reaction>
        <text>Endohydrolysis of (1-&gt;4)-beta-D-xylosidic linkages in xylans.</text>
        <dbReference type="EC" id="3.2.1.8"/>
    </reaction>
</comment>
<comment type="pathway">
    <text evidence="1">Glycan degradation; xylan degradation.</text>
</comment>
<comment type="subcellular location">
    <subcellularLocation>
        <location evidence="7">Secreted</location>
    </subcellularLocation>
</comment>
<comment type="tissue specificity">
    <text evidence="6">Expressed in larval carcasses and gut, and adult gut.</text>
</comment>
<comment type="developmental stage">
    <text evidence="6">Larvae and adult.</text>
</comment>
<comment type="similarity">
    <text evidence="2">Belongs to the glycosyl hydrolase 11 (cellulase G) family.</text>
</comment>
<keyword id="KW-0119">Carbohydrate metabolism</keyword>
<keyword id="KW-0222">Digestion</keyword>
<keyword id="KW-0325">Glycoprotein</keyword>
<keyword id="KW-0326">Glycosidase</keyword>
<keyword id="KW-0378">Hydrolase</keyword>
<keyword id="KW-0624">Polysaccharide degradation</keyword>
<keyword id="KW-0964">Secreted</keyword>
<keyword id="KW-0732">Signal</keyword>
<keyword id="KW-0858">Xylan degradation</keyword>
<accession>O97402</accession>
<accession>P81525</accession>
<organism>
    <name type="scientific">Phaedon cochleariae</name>
    <name type="common">Mustard beetle</name>
    <dbReference type="NCBI Taxonomy" id="80249"/>
    <lineage>
        <taxon>Eukaryota</taxon>
        <taxon>Metazoa</taxon>
        <taxon>Ecdysozoa</taxon>
        <taxon>Arthropoda</taxon>
        <taxon>Hexapoda</taxon>
        <taxon>Insecta</taxon>
        <taxon>Pterygota</taxon>
        <taxon>Neoptera</taxon>
        <taxon>Endopterygota</taxon>
        <taxon>Coleoptera</taxon>
        <taxon>Polyphaga</taxon>
        <taxon>Cucujiformia</taxon>
        <taxon>Chrysomeloidea</taxon>
        <taxon>Chrysomelidae</taxon>
        <taxon>Chrysomelinae</taxon>
        <taxon>Chrysomelini</taxon>
        <taxon>Phaedon</taxon>
    </lineage>
</organism>
<protein>
    <recommendedName>
        <fullName>Endo-1,4-beta-xylanase</fullName>
        <shortName>Xylanase</shortName>
        <ecNumber>3.2.1.8</ecNumber>
    </recommendedName>
    <alternativeName>
        <fullName>1,4-beta-D-xylan xylanohydrolase</fullName>
    </alternativeName>
</protein>
<evidence type="ECO:0000250" key="1">
    <source>
        <dbReference type="UniProtKB" id="P36217"/>
    </source>
</evidence>
<evidence type="ECO:0000255" key="2"/>
<evidence type="ECO:0000255" key="3">
    <source>
        <dbReference type="PROSITE-ProRule" id="PRU01097"/>
    </source>
</evidence>
<evidence type="ECO:0000255" key="4">
    <source>
        <dbReference type="PROSITE-ProRule" id="PRU10062"/>
    </source>
</evidence>
<evidence type="ECO:0000255" key="5">
    <source>
        <dbReference type="PROSITE-ProRule" id="PRU10063"/>
    </source>
</evidence>
<evidence type="ECO:0000269" key="6">
    <source>
    </source>
</evidence>
<evidence type="ECO:0000305" key="7"/>
<evidence type="ECO:0000312" key="8">
    <source>
        <dbReference type="EMBL" id="CAA76932.1"/>
    </source>
</evidence>
<feature type="signal peptide" evidence="2">
    <location>
        <begin position="1"/>
        <end position="17"/>
    </location>
</feature>
<feature type="chain" id="PRO_5000147330" description="Endo-1,4-beta-xylanase" evidence="2">
    <location>
        <begin position="18"/>
        <end position="217"/>
    </location>
</feature>
<feature type="domain" description="GH11" evidence="3">
    <location>
        <begin position="20"/>
        <end position="217"/>
    </location>
</feature>
<feature type="active site" description="Nucleophile" evidence="1 4">
    <location>
        <position position="107"/>
    </location>
</feature>
<feature type="active site" description="Proton donor" evidence="1 5">
    <location>
        <position position="204"/>
    </location>
</feature>
<feature type="glycosylation site" description="N-linked (GlcNAc...) asparagine" evidence="2">
    <location>
        <position position="56"/>
    </location>
</feature>
<feature type="glycosylation site" description="N-linked (GlcNAc...) asparagine" evidence="2">
    <location>
        <position position="80"/>
    </location>
</feature>
<reference evidence="7 8" key="1">
    <citation type="journal article" date="1999" name="Insect Biochem. Mol. Biol.">
        <title>Molecular cloning of cDNAs encoding a range of digestive enzymes from a phytophagous beetle, Phaedon cochleariae.</title>
        <authorList>
            <person name="Girard C."/>
            <person name="Jouanin L."/>
        </authorList>
    </citation>
    <scope>NUCLEOTIDE SEQUENCE [MRNA]</scope>
    <scope>TISSUE SPECIFICITY</scope>
    <scope>DEVELOPMENTAL STAGE</scope>
    <source>
        <tissue evidence="6">Larval gut</tissue>
    </source>
</reference>